<organism>
    <name type="scientific">Staphylococcus epidermidis (strain ATCC 35984 / DSM 28319 / BCRC 17069 / CCUG 31568 / BM 3577 / RP62A)</name>
    <dbReference type="NCBI Taxonomy" id="176279"/>
    <lineage>
        <taxon>Bacteria</taxon>
        <taxon>Bacillati</taxon>
        <taxon>Bacillota</taxon>
        <taxon>Bacilli</taxon>
        <taxon>Bacillales</taxon>
        <taxon>Staphylococcaceae</taxon>
        <taxon>Staphylococcus</taxon>
    </lineage>
</organism>
<dbReference type="EC" id="4.3.2.10" evidence="1"/>
<dbReference type="EC" id="3.5.1.2" evidence="1"/>
<dbReference type="EMBL" id="CP000029">
    <property type="protein sequence ID" value="AAW53200.1"/>
    <property type="molecule type" value="Genomic_DNA"/>
</dbReference>
<dbReference type="RefSeq" id="WP_002470289.1">
    <property type="nucleotide sequence ID" value="NC_002976.3"/>
</dbReference>
<dbReference type="SMR" id="Q5HKP0"/>
<dbReference type="STRING" id="176279.SERP2303"/>
<dbReference type="KEGG" id="ser:SERP2303"/>
<dbReference type="eggNOG" id="COG0118">
    <property type="taxonomic scope" value="Bacteria"/>
</dbReference>
<dbReference type="HOGENOM" id="CLU_071837_2_2_9"/>
<dbReference type="UniPathway" id="UPA00031">
    <property type="reaction ID" value="UER00010"/>
</dbReference>
<dbReference type="Proteomes" id="UP000000531">
    <property type="component" value="Chromosome"/>
</dbReference>
<dbReference type="GO" id="GO:0005737">
    <property type="term" value="C:cytoplasm"/>
    <property type="evidence" value="ECO:0007669"/>
    <property type="project" value="UniProtKB-SubCell"/>
</dbReference>
<dbReference type="GO" id="GO:0004359">
    <property type="term" value="F:glutaminase activity"/>
    <property type="evidence" value="ECO:0007669"/>
    <property type="project" value="UniProtKB-EC"/>
</dbReference>
<dbReference type="GO" id="GO:0000107">
    <property type="term" value="F:imidazoleglycerol-phosphate synthase activity"/>
    <property type="evidence" value="ECO:0007669"/>
    <property type="project" value="UniProtKB-UniRule"/>
</dbReference>
<dbReference type="GO" id="GO:0016829">
    <property type="term" value="F:lyase activity"/>
    <property type="evidence" value="ECO:0007669"/>
    <property type="project" value="UniProtKB-KW"/>
</dbReference>
<dbReference type="GO" id="GO:0000105">
    <property type="term" value="P:L-histidine biosynthetic process"/>
    <property type="evidence" value="ECO:0007669"/>
    <property type="project" value="UniProtKB-UniRule"/>
</dbReference>
<dbReference type="CDD" id="cd01748">
    <property type="entry name" value="GATase1_IGP_Synthase"/>
    <property type="match status" value="1"/>
</dbReference>
<dbReference type="Gene3D" id="3.40.50.880">
    <property type="match status" value="1"/>
</dbReference>
<dbReference type="HAMAP" id="MF_00278">
    <property type="entry name" value="HisH"/>
    <property type="match status" value="1"/>
</dbReference>
<dbReference type="InterPro" id="IPR029062">
    <property type="entry name" value="Class_I_gatase-like"/>
</dbReference>
<dbReference type="InterPro" id="IPR017926">
    <property type="entry name" value="GATASE"/>
</dbReference>
<dbReference type="InterPro" id="IPR010139">
    <property type="entry name" value="Imidazole-glycPsynth_HisH"/>
</dbReference>
<dbReference type="NCBIfam" id="TIGR01855">
    <property type="entry name" value="IMP_synth_hisH"/>
    <property type="match status" value="1"/>
</dbReference>
<dbReference type="PANTHER" id="PTHR42701">
    <property type="entry name" value="IMIDAZOLE GLYCEROL PHOSPHATE SYNTHASE SUBUNIT HISH"/>
    <property type="match status" value="1"/>
</dbReference>
<dbReference type="PANTHER" id="PTHR42701:SF1">
    <property type="entry name" value="IMIDAZOLE GLYCEROL PHOSPHATE SYNTHASE SUBUNIT HISH"/>
    <property type="match status" value="1"/>
</dbReference>
<dbReference type="Pfam" id="PF00117">
    <property type="entry name" value="GATase"/>
    <property type="match status" value="1"/>
</dbReference>
<dbReference type="PIRSF" id="PIRSF000495">
    <property type="entry name" value="Amidotransf_hisH"/>
    <property type="match status" value="1"/>
</dbReference>
<dbReference type="SUPFAM" id="SSF52317">
    <property type="entry name" value="Class I glutamine amidotransferase-like"/>
    <property type="match status" value="1"/>
</dbReference>
<dbReference type="PROSITE" id="PS51273">
    <property type="entry name" value="GATASE_TYPE_1"/>
    <property type="match status" value="1"/>
</dbReference>
<sequence>MIAIIDYGLGNISNVTRAIQHLGYDVILTCDDKDVQKAEAIVLPGVGHFQDAMHSIEEKSIKDMLKNIHDKPIIGICLGMQLLFQHSAEGDVSGLELVPGNIVPIQSSHPIPHLGWNELKSTHPLLQSDVYFVHSYQAEMSEYVVAYADYGTKIPGVIQYRNYIGIQFHPEKSGTYGLEILNQALKGGFIND</sequence>
<accession>Q5HKP0</accession>
<reference key="1">
    <citation type="journal article" date="2005" name="J. Bacteriol.">
        <title>Insights on evolution of virulence and resistance from the complete genome analysis of an early methicillin-resistant Staphylococcus aureus strain and a biofilm-producing methicillin-resistant Staphylococcus epidermidis strain.</title>
        <authorList>
            <person name="Gill S.R."/>
            <person name="Fouts D.E."/>
            <person name="Archer G.L."/>
            <person name="Mongodin E.F."/>
            <person name="DeBoy R.T."/>
            <person name="Ravel J."/>
            <person name="Paulsen I.T."/>
            <person name="Kolonay J.F."/>
            <person name="Brinkac L.M."/>
            <person name="Beanan M.J."/>
            <person name="Dodson R.J."/>
            <person name="Daugherty S.C."/>
            <person name="Madupu R."/>
            <person name="Angiuoli S.V."/>
            <person name="Durkin A.S."/>
            <person name="Haft D.H."/>
            <person name="Vamathevan J.J."/>
            <person name="Khouri H."/>
            <person name="Utterback T.R."/>
            <person name="Lee C."/>
            <person name="Dimitrov G."/>
            <person name="Jiang L."/>
            <person name="Qin H."/>
            <person name="Weidman J."/>
            <person name="Tran K."/>
            <person name="Kang K.H."/>
            <person name="Hance I.R."/>
            <person name="Nelson K.E."/>
            <person name="Fraser C.M."/>
        </authorList>
    </citation>
    <scope>NUCLEOTIDE SEQUENCE [LARGE SCALE GENOMIC DNA]</scope>
    <source>
        <strain>ATCC 35984 / DSM 28319 / BCRC 17069 / CCUG 31568 / BM 3577 / RP62A</strain>
    </source>
</reference>
<protein>
    <recommendedName>
        <fullName evidence="1">Imidazole glycerol phosphate synthase subunit HisH</fullName>
        <ecNumber evidence="1">4.3.2.10</ecNumber>
    </recommendedName>
    <alternativeName>
        <fullName evidence="1">IGP synthase glutaminase subunit</fullName>
        <ecNumber evidence="1">3.5.1.2</ecNumber>
    </alternativeName>
    <alternativeName>
        <fullName evidence="1">IGP synthase subunit HisH</fullName>
    </alternativeName>
    <alternativeName>
        <fullName evidence="1">ImGP synthase subunit HisH</fullName>
        <shortName evidence="1">IGPS subunit HisH</shortName>
    </alternativeName>
</protein>
<proteinExistence type="inferred from homology"/>
<comment type="function">
    <text evidence="1">IGPS catalyzes the conversion of PRFAR and glutamine to IGP, AICAR and glutamate. The HisH subunit catalyzes the hydrolysis of glutamine to glutamate and ammonia as part of the synthesis of IGP and AICAR. The resulting ammonia molecule is channeled to the active site of HisF.</text>
</comment>
<comment type="catalytic activity">
    <reaction evidence="1">
        <text>5-[(5-phospho-1-deoxy-D-ribulos-1-ylimino)methylamino]-1-(5-phospho-beta-D-ribosyl)imidazole-4-carboxamide + L-glutamine = D-erythro-1-(imidazol-4-yl)glycerol 3-phosphate + 5-amino-1-(5-phospho-beta-D-ribosyl)imidazole-4-carboxamide + L-glutamate + H(+)</text>
        <dbReference type="Rhea" id="RHEA:24793"/>
        <dbReference type="ChEBI" id="CHEBI:15378"/>
        <dbReference type="ChEBI" id="CHEBI:29985"/>
        <dbReference type="ChEBI" id="CHEBI:58278"/>
        <dbReference type="ChEBI" id="CHEBI:58359"/>
        <dbReference type="ChEBI" id="CHEBI:58475"/>
        <dbReference type="ChEBI" id="CHEBI:58525"/>
        <dbReference type="EC" id="4.3.2.10"/>
    </reaction>
</comment>
<comment type="catalytic activity">
    <reaction evidence="1">
        <text>L-glutamine + H2O = L-glutamate + NH4(+)</text>
        <dbReference type="Rhea" id="RHEA:15889"/>
        <dbReference type="ChEBI" id="CHEBI:15377"/>
        <dbReference type="ChEBI" id="CHEBI:28938"/>
        <dbReference type="ChEBI" id="CHEBI:29985"/>
        <dbReference type="ChEBI" id="CHEBI:58359"/>
        <dbReference type="EC" id="3.5.1.2"/>
    </reaction>
</comment>
<comment type="pathway">
    <text evidence="1">Amino-acid biosynthesis; L-histidine biosynthesis; L-histidine from 5-phospho-alpha-D-ribose 1-diphosphate: step 5/9.</text>
</comment>
<comment type="subunit">
    <text evidence="1">Heterodimer of HisH and HisF.</text>
</comment>
<comment type="subcellular location">
    <subcellularLocation>
        <location evidence="1">Cytoplasm</location>
    </subcellularLocation>
</comment>
<keyword id="KW-0028">Amino-acid biosynthesis</keyword>
<keyword id="KW-0963">Cytoplasm</keyword>
<keyword id="KW-0315">Glutamine amidotransferase</keyword>
<keyword id="KW-0368">Histidine biosynthesis</keyword>
<keyword id="KW-0378">Hydrolase</keyword>
<keyword id="KW-0456">Lyase</keyword>
<keyword id="KW-1185">Reference proteome</keyword>
<gene>
    <name evidence="1" type="primary">hisH</name>
    <name type="ordered locus">SERP2303</name>
</gene>
<feature type="chain" id="PRO_0000152429" description="Imidazole glycerol phosphate synthase subunit HisH">
    <location>
        <begin position="1"/>
        <end position="192"/>
    </location>
</feature>
<feature type="domain" description="Glutamine amidotransferase type-1" evidence="1">
    <location>
        <begin position="1"/>
        <end position="192"/>
    </location>
</feature>
<feature type="active site" description="Nucleophile" evidence="1">
    <location>
        <position position="77"/>
    </location>
</feature>
<feature type="active site" evidence="1">
    <location>
        <position position="169"/>
    </location>
</feature>
<feature type="active site" evidence="1">
    <location>
        <position position="171"/>
    </location>
</feature>
<evidence type="ECO:0000255" key="1">
    <source>
        <dbReference type="HAMAP-Rule" id="MF_00278"/>
    </source>
</evidence>
<name>HIS5_STAEQ</name>